<protein>
    <recommendedName>
        <fullName>Probable sodium/sulfate cotransporter 3</fullName>
    </recommendedName>
    <alternativeName>
        <fullName>SAC1-like transporter 3</fullName>
        <shortName>CrSLT3</shortName>
    </alternativeName>
</protein>
<comment type="function">
    <text evidence="4">Na(+)/sulfate cotransporter with a probable low-affinity for sulfate.</text>
</comment>
<comment type="subcellular location">
    <subcellularLocation>
        <location evidence="5">Cell membrane</location>
        <topology evidence="5">Multi-pass membrane protein</topology>
    </subcellularLocation>
</comment>
<comment type="induction">
    <text evidence="4">Down-regulated by sulfur deprivation.</text>
</comment>
<comment type="similarity">
    <text evidence="5">Belongs to the divalent anion:Na+ symporter (DASS) superfamily. Na+/sulfate symporter (TC 2.A.47.4) family.</text>
</comment>
<gene>
    <name type="primary">SLT3</name>
    <name type="ORF">CHLREDRAFT_205500</name>
</gene>
<dbReference type="EMBL" id="DS496117">
    <property type="protein sequence ID" value="EDP05749.1"/>
    <property type="molecule type" value="Genomic_DNA"/>
</dbReference>
<dbReference type="RefSeq" id="XP_001690490.1">
    <property type="nucleotide sequence ID" value="XM_001690438.1"/>
</dbReference>
<dbReference type="PaxDb" id="3055-EDP05749"/>
<dbReference type="eggNOG" id="ENOG502QPZM">
    <property type="taxonomic scope" value="Eukaryota"/>
</dbReference>
<dbReference type="HOGENOM" id="CLU_005170_6_0_1"/>
<dbReference type="GO" id="GO:0005886">
    <property type="term" value="C:plasma membrane"/>
    <property type="evidence" value="ECO:0007669"/>
    <property type="project" value="UniProtKB-SubCell"/>
</dbReference>
<dbReference type="GO" id="GO:0008324">
    <property type="term" value="F:monoatomic cation transmembrane transporter activity"/>
    <property type="evidence" value="ECO:0007669"/>
    <property type="project" value="InterPro"/>
</dbReference>
<dbReference type="GO" id="GO:0015293">
    <property type="term" value="F:symporter activity"/>
    <property type="evidence" value="ECO:0007669"/>
    <property type="project" value="UniProtKB-KW"/>
</dbReference>
<dbReference type="GO" id="GO:0006813">
    <property type="term" value="P:potassium ion transport"/>
    <property type="evidence" value="ECO:0007669"/>
    <property type="project" value="InterPro"/>
</dbReference>
<dbReference type="FunFam" id="3.30.70.1450:FF:000009">
    <property type="entry name" value="SLC13 family permease"/>
    <property type="match status" value="2"/>
</dbReference>
<dbReference type="Gene3D" id="3.30.70.1450">
    <property type="entry name" value="Regulator of K+ conductance, C-terminal domain"/>
    <property type="match status" value="4"/>
</dbReference>
<dbReference type="InterPro" id="IPR004680">
    <property type="entry name" value="Cit_transptr-like_dom"/>
</dbReference>
<dbReference type="InterPro" id="IPR051679">
    <property type="entry name" value="DASS-Related_Transporters"/>
</dbReference>
<dbReference type="InterPro" id="IPR006037">
    <property type="entry name" value="RCK_C"/>
</dbReference>
<dbReference type="InterPro" id="IPR036721">
    <property type="entry name" value="RCK_C_sf"/>
</dbReference>
<dbReference type="PANTHER" id="PTHR43652">
    <property type="entry name" value="BASIC AMINO ACID ANTIPORTER YFCC-RELATED"/>
    <property type="match status" value="1"/>
</dbReference>
<dbReference type="PANTHER" id="PTHR43652:SF9">
    <property type="entry name" value="RCK C-TERMINAL DOMAIN-CONTAINING PROTEIN"/>
    <property type="match status" value="1"/>
</dbReference>
<dbReference type="Pfam" id="PF03600">
    <property type="entry name" value="CitMHS"/>
    <property type="match status" value="1"/>
</dbReference>
<dbReference type="Pfam" id="PF02080">
    <property type="entry name" value="TrkA_C"/>
    <property type="match status" value="4"/>
</dbReference>
<dbReference type="SUPFAM" id="SSF116726">
    <property type="entry name" value="TrkA C-terminal domain-like"/>
    <property type="match status" value="4"/>
</dbReference>
<dbReference type="PROSITE" id="PS51202">
    <property type="entry name" value="RCK_C"/>
    <property type="match status" value="4"/>
</dbReference>
<keyword id="KW-1003">Cell membrane</keyword>
<keyword id="KW-0472">Membrane</keyword>
<keyword id="KW-0677">Repeat</keyword>
<keyword id="KW-0346">Stress response</keyword>
<keyword id="KW-0764">Sulfate transport</keyword>
<keyword id="KW-0769">Symport</keyword>
<keyword id="KW-0812">Transmembrane</keyword>
<keyword id="KW-1133">Transmembrane helix</keyword>
<keyword id="KW-0813">Transport</keyword>
<accession>A8IHV3</accession>
<organism>
    <name type="scientific">Chlamydomonas reinhardtii</name>
    <name type="common">Chlamydomonas smithii</name>
    <dbReference type="NCBI Taxonomy" id="3055"/>
    <lineage>
        <taxon>Eukaryota</taxon>
        <taxon>Viridiplantae</taxon>
        <taxon>Chlorophyta</taxon>
        <taxon>core chlorophytes</taxon>
        <taxon>Chlorophyceae</taxon>
        <taxon>CS clade</taxon>
        <taxon>Chlamydomonadales</taxon>
        <taxon>Chlamydomonadaceae</taxon>
        <taxon>Chlamydomonas</taxon>
    </lineage>
</organism>
<feature type="chain" id="PRO_0000417126" description="Probable sodium/sulfate cotransporter 3">
    <location>
        <begin position="1"/>
        <end position="896"/>
    </location>
</feature>
<feature type="transmembrane region" description="Helical" evidence="1">
    <location>
        <begin position="1"/>
        <end position="21"/>
    </location>
</feature>
<feature type="transmembrane region" description="Helical" evidence="1">
    <location>
        <begin position="47"/>
        <end position="69"/>
    </location>
</feature>
<feature type="transmembrane region" description="Helical" evidence="1">
    <location>
        <begin position="106"/>
        <end position="126"/>
    </location>
</feature>
<feature type="transmembrane region" description="Helical" evidence="1">
    <location>
        <begin position="140"/>
        <end position="160"/>
    </location>
</feature>
<feature type="transmembrane region" description="Helical" evidence="1">
    <location>
        <begin position="186"/>
        <end position="206"/>
    </location>
</feature>
<feature type="transmembrane region" description="Helical" evidence="1">
    <location>
        <begin position="602"/>
        <end position="622"/>
    </location>
</feature>
<feature type="transmembrane region" description="Helical" evidence="1">
    <location>
        <begin position="626"/>
        <end position="646"/>
    </location>
</feature>
<feature type="transmembrane region" description="Helical" evidence="1">
    <location>
        <begin position="654"/>
        <end position="674"/>
    </location>
</feature>
<feature type="transmembrane region" description="Helical" evidence="1">
    <location>
        <begin position="685"/>
        <end position="705"/>
    </location>
</feature>
<feature type="transmembrane region" description="Helical" evidence="1">
    <location>
        <begin position="734"/>
        <end position="754"/>
    </location>
</feature>
<feature type="transmembrane region" description="Helical" evidence="1">
    <location>
        <begin position="776"/>
        <end position="796"/>
    </location>
</feature>
<feature type="transmembrane region" description="Helical" evidence="1">
    <location>
        <begin position="804"/>
        <end position="824"/>
    </location>
</feature>
<feature type="domain" description="RCK C-terminal 1" evidence="2">
    <location>
        <begin position="212"/>
        <end position="296"/>
    </location>
</feature>
<feature type="domain" description="RCK C-terminal 2" evidence="2">
    <location>
        <begin position="319"/>
        <end position="404"/>
    </location>
</feature>
<feature type="domain" description="RCK C-terminal 3" evidence="2">
    <location>
        <begin position="408"/>
        <end position="493"/>
    </location>
</feature>
<feature type="domain" description="RCK C-terminal 4" evidence="2">
    <location>
        <begin position="499"/>
        <end position="586"/>
    </location>
</feature>
<feature type="region of interest" description="Disordered" evidence="3">
    <location>
        <begin position="857"/>
        <end position="881"/>
    </location>
</feature>
<feature type="compositionally biased region" description="Polar residues" evidence="3">
    <location>
        <begin position="868"/>
        <end position="881"/>
    </location>
</feature>
<evidence type="ECO:0000255" key="1"/>
<evidence type="ECO:0000255" key="2">
    <source>
        <dbReference type="PROSITE-ProRule" id="PRU00544"/>
    </source>
</evidence>
<evidence type="ECO:0000256" key="3">
    <source>
        <dbReference type="SAM" id="MobiDB-lite"/>
    </source>
</evidence>
<evidence type="ECO:0000269" key="4">
    <source>
    </source>
</evidence>
<evidence type="ECO:0000305" key="5"/>
<proteinExistence type="evidence at transcript level"/>
<reference key="1">
    <citation type="journal article" date="2007" name="Science">
        <title>The Chlamydomonas genome reveals the evolution of key animal and plant functions.</title>
        <authorList>
            <person name="Merchant S.S."/>
            <person name="Prochnik S.E."/>
            <person name="Vallon O."/>
            <person name="Harris E.H."/>
            <person name="Karpowicz S.J."/>
            <person name="Witman G.B."/>
            <person name="Terry A."/>
            <person name="Salamov A."/>
            <person name="Fritz-Laylin L.K."/>
            <person name="Marechal-Drouard L."/>
            <person name="Marshall W.F."/>
            <person name="Qu L.H."/>
            <person name="Nelson D.R."/>
            <person name="Sanderfoot A.A."/>
            <person name="Spalding M.H."/>
            <person name="Kapitonov V.V."/>
            <person name="Ren Q."/>
            <person name="Ferris P."/>
            <person name="Lindquist E."/>
            <person name="Shapiro H."/>
            <person name="Lucas S.M."/>
            <person name="Grimwood J."/>
            <person name="Schmutz J."/>
            <person name="Cardol P."/>
            <person name="Cerutti H."/>
            <person name="Chanfreau G."/>
            <person name="Chen C.L."/>
            <person name="Cognat V."/>
            <person name="Croft M.T."/>
            <person name="Dent R."/>
            <person name="Dutcher S."/>
            <person name="Fernandez E."/>
            <person name="Fukuzawa H."/>
            <person name="Gonzalez-Ballester D."/>
            <person name="Gonzalez-Halphen D."/>
            <person name="Hallmann A."/>
            <person name="Hanikenne M."/>
            <person name="Hippler M."/>
            <person name="Inwood W."/>
            <person name="Jabbari K."/>
            <person name="Kalanon M."/>
            <person name="Kuras R."/>
            <person name="Lefebvre P.A."/>
            <person name="Lemaire S.D."/>
            <person name="Lobanov A.V."/>
            <person name="Lohr M."/>
            <person name="Manuell A."/>
            <person name="Meier I."/>
            <person name="Mets L."/>
            <person name="Mittag M."/>
            <person name="Mittelmeier T."/>
            <person name="Moroney J.V."/>
            <person name="Moseley J."/>
            <person name="Napoli C."/>
            <person name="Nedelcu A.M."/>
            <person name="Niyogi K."/>
            <person name="Novoselov S.V."/>
            <person name="Paulsen I.T."/>
            <person name="Pazour G.J."/>
            <person name="Purton S."/>
            <person name="Ral J.P."/>
            <person name="Riano-Pachon D.M."/>
            <person name="Riekhof W."/>
            <person name="Rymarquis L."/>
            <person name="Schroda M."/>
            <person name="Stern D."/>
            <person name="Umen J."/>
            <person name="Willows R."/>
            <person name="Wilson N."/>
            <person name="Zimmer S.L."/>
            <person name="Allmer J."/>
            <person name="Balk J."/>
            <person name="Bisova K."/>
            <person name="Chen C.J."/>
            <person name="Elias M."/>
            <person name="Gendler K."/>
            <person name="Hauser C."/>
            <person name="Lamb M.R."/>
            <person name="Ledford H."/>
            <person name="Long J.C."/>
            <person name="Minagawa J."/>
            <person name="Page M.D."/>
            <person name="Pan J."/>
            <person name="Pootakham W."/>
            <person name="Roje S."/>
            <person name="Rose A."/>
            <person name="Stahlberg E."/>
            <person name="Terauchi A.M."/>
            <person name="Yang P."/>
            <person name="Ball S."/>
            <person name="Bowler C."/>
            <person name="Dieckmann C.L."/>
            <person name="Gladyshev V.N."/>
            <person name="Green P."/>
            <person name="Jorgensen R."/>
            <person name="Mayfield S."/>
            <person name="Mueller-Roeber B."/>
            <person name="Rajamani S."/>
            <person name="Sayre R.T."/>
            <person name="Brokstein P."/>
            <person name="Dubchak I."/>
            <person name="Goodstein D."/>
            <person name="Hornick L."/>
            <person name="Huang Y.W."/>
            <person name="Jhaveri J."/>
            <person name="Luo Y."/>
            <person name="Martinez D."/>
            <person name="Ngau W.C."/>
            <person name="Otillar B."/>
            <person name="Poliakov A."/>
            <person name="Porter A."/>
            <person name="Szajkowski L."/>
            <person name="Werner G."/>
            <person name="Zhou K."/>
            <person name="Grigoriev I.V."/>
            <person name="Rokhsar D.S."/>
            <person name="Grossman A.R."/>
        </authorList>
    </citation>
    <scope>NUCLEOTIDE SEQUENCE [LARGE SCALE GENOMIC DNA]</scope>
    <source>
        <strain>CC-503</strain>
    </source>
</reference>
<reference key="2">
    <citation type="journal article" date="2010" name="Plant Physiol.">
        <title>Identification and regulation of plasma membrane sulfate transporters in Chlamydomonas.</title>
        <authorList>
            <person name="Pootakham W."/>
            <person name="Gonzalez-Ballester D."/>
            <person name="Grossman A.R."/>
        </authorList>
    </citation>
    <scope>IDENTIFICATION</scope>
    <scope>FUNCTION</scope>
    <scope>INDUCTION BY SULFUR</scope>
</reference>
<name>SLT3_CHLRE</name>
<sequence>MAAIGWPGIVAIISVAISFIIMAADWVGPDITFTILLSWLTAFDGKIITVAKAAAGYGNTGLLTVIFLYWVAEGVTQTGGLELVMNYVLGRSRSVHWALVRSMFPVMVLSAFLNNTPCVTFMIPILMSWARRCGVPPKKLLIPLSYAAVLGGTCTSIGTSTNLVIVGMQDTRYNKQNKEDEAKFGMFDIAPYGVPYALMGFVFIILTQRFLLPGNSSRYAKDLLIAVRVLPSSPVVKKKLKDSGLRTQTGFSLAGLWRGGAMTRQVDPDTVLEANDILYCAGELDVVEFVGEEFGLGLVTAETERALTDGQAVGDSEATAFHDTGASPYKKLVQVTMTKTADLVGRTVREVSWQGRFGLIPVAIQRGNGREDGRLNDVVLAAGDVLILDTTPHFDEARDDFKINFEKLRFVKDGAAKEFVIGVKVKKNSEVVNKTVTAAGLRGVPGLFVLSVDRADGSSVDASDYLYKIQPGDTLWLAADVGAVGFLSKFPGLELVQQEQVDKTGTSILYRHLVQAAVSHKGPLVGKTVRDVRFRTLYNAAIVAVHREGVRVPLKVQDIVLQGGDVLLISCHTKWAEEHRMDKAFVLVQAVPDSSPPKRGRMAIGVLLVVGMVLTQIVGGLKEKEYIHLWPAAVLTAALMLLTGCMNADQARKAIMWDVYLTIAAAFGVSAALENTGVAGKVANAIISIGKSIGGDGPALIAIYVATAVMSELLTNNAAGAIMYPIAAIAGDQLKIPAVDISVAIMLGASAGFINPFSYQTNLMVYAAGNYSVREFATIGAPFQIWLMVVASFILCYMKQWKQVWIATWSITAFIVFVPALLTLLPHTVQNRMEAFFDRIAEAINPRAALQRRRSARAQSFGGKAMSVGSTESRTDGSSTPDVALTFIEMPKMGVR</sequence>